<protein>
    <recommendedName>
        <fullName evidence="1">Phosphoglycerate kinase</fullName>
        <ecNumber evidence="1">2.7.2.3</ecNumber>
    </recommendedName>
</protein>
<reference key="1">
    <citation type="journal article" date="2008" name="PLoS ONE">
        <title>Genome sequence of the saprophyte Leptospira biflexa provides insights into the evolution of Leptospira and the pathogenesis of leptospirosis.</title>
        <authorList>
            <person name="Picardeau M."/>
            <person name="Bulach D.M."/>
            <person name="Bouchier C."/>
            <person name="Zuerner R.L."/>
            <person name="Zidane N."/>
            <person name="Wilson P.J."/>
            <person name="Creno S."/>
            <person name="Kuczek E.S."/>
            <person name="Bommezzadri S."/>
            <person name="Davis J.C."/>
            <person name="McGrath A."/>
            <person name="Johnson M.J."/>
            <person name="Boursaux-Eude C."/>
            <person name="Seemann T."/>
            <person name="Rouy Z."/>
            <person name="Coppel R.L."/>
            <person name="Rood J.I."/>
            <person name="Lajus A."/>
            <person name="Davies J.K."/>
            <person name="Medigue C."/>
            <person name="Adler B."/>
        </authorList>
    </citation>
    <scope>NUCLEOTIDE SEQUENCE [LARGE SCALE GENOMIC DNA]</scope>
    <source>
        <strain>Patoc 1 / Ames</strain>
    </source>
</reference>
<feature type="chain" id="PRO_1000096353" description="Phosphoglycerate kinase">
    <location>
        <begin position="1"/>
        <end position="396"/>
    </location>
</feature>
<feature type="binding site" evidence="1">
    <location>
        <begin position="21"/>
        <end position="23"/>
    </location>
    <ligand>
        <name>substrate</name>
    </ligand>
</feature>
<feature type="binding site" evidence="1">
    <location>
        <position position="36"/>
    </location>
    <ligand>
        <name>substrate</name>
    </ligand>
</feature>
<feature type="binding site" evidence="1">
    <location>
        <begin position="59"/>
        <end position="62"/>
    </location>
    <ligand>
        <name>substrate</name>
    </ligand>
</feature>
<feature type="binding site" evidence="1">
    <location>
        <position position="118"/>
    </location>
    <ligand>
        <name>substrate</name>
    </ligand>
</feature>
<feature type="binding site" evidence="1">
    <location>
        <position position="151"/>
    </location>
    <ligand>
        <name>substrate</name>
    </ligand>
</feature>
<feature type="binding site" evidence="1">
    <location>
        <position position="201"/>
    </location>
    <ligand>
        <name>ATP</name>
        <dbReference type="ChEBI" id="CHEBI:30616"/>
    </ligand>
</feature>
<feature type="binding site" evidence="1">
    <location>
        <position position="292"/>
    </location>
    <ligand>
        <name>ATP</name>
        <dbReference type="ChEBI" id="CHEBI:30616"/>
    </ligand>
</feature>
<feature type="binding site" evidence="1">
    <location>
        <position position="323"/>
    </location>
    <ligand>
        <name>ATP</name>
        <dbReference type="ChEBI" id="CHEBI:30616"/>
    </ligand>
</feature>
<feature type="binding site" evidence="1">
    <location>
        <begin position="349"/>
        <end position="352"/>
    </location>
    <ligand>
        <name>ATP</name>
        <dbReference type="ChEBI" id="CHEBI:30616"/>
    </ligand>
</feature>
<proteinExistence type="inferred from homology"/>
<keyword id="KW-0067">ATP-binding</keyword>
<keyword id="KW-0963">Cytoplasm</keyword>
<keyword id="KW-0324">Glycolysis</keyword>
<keyword id="KW-0418">Kinase</keyword>
<keyword id="KW-0547">Nucleotide-binding</keyword>
<keyword id="KW-0808">Transferase</keyword>
<sequence>MKLPLLEEQNLKGKRVFVRVDFNVPVENGKATDRTRIEKTLPTLELLISKGAKIILGSHLGRPKGGPEPKYSMKPVFDVLSELVKTKVSFSESVIGSDVVKMTNALGEGEILLLENLRFHKEEEENVASFCKELAKLADVYVNDAFGTAHRAHASTEGVAHLLPAFAGLLMRKEIEVLSGLLAKPERPFVAIVGGSKVSSKFAILKNLLEKVDHLLIGGGMAYTFLKSRAVPVGKSLVEPEFESQAFQLIDRAGIQGVDLQIPVDHIIADAFDPNAKTKSVDKMGIIDGWMGMDIGPKTIDNYVKAIKDAKTILWNGPMGVFEMDKFSKGTIEIAKAISKSKAKTVVGGGDSIAAVNKAGVADKITHISTGGGASLEFLEGRTLPGVQCLLPKEEK</sequence>
<accession>B0SB21</accession>
<comment type="catalytic activity">
    <reaction evidence="1">
        <text>(2R)-3-phosphoglycerate + ATP = (2R)-3-phospho-glyceroyl phosphate + ADP</text>
        <dbReference type="Rhea" id="RHEA:14801"/>
        <dbReference type="ChEBI" id="CHEBI:30616"/>
        <dbReference type="ChEBI" id="CHEBI:57604"/>
        <dbReference type="ChEBI" id="CHEBI:58272"/>
        <dbReference type="ChEBI" id="CHEBI:456216"/>
        <dbReference type="EC" id="2.7.2.3"/>
    </reaction>
</comment>
<comment type="pathway">
    <text evidence="1">Carbohydrate degradation; glycolysis; pyruvate from D-glyceraldehyde 3-phosphate: step 2/5.</text>
</comment>
<comment type="subunit">
    <text evidence="1">Monomer.</text>
</comment>
<comment type="subcellular location">
    <subcellularLocation>
        <location evidence="1">Cytoplasm</location>
    </subcellularLocation>
</comment>
<comment type="similarity">
    <text evidence="1">Belongs to the phosphoglycerate kinase family.</text>
</comment>
<organism>
    <name type="scientific">Leptospira biflexa serovar Patoc (strain Patoc 1 / Ames)</name>
    <dbReference type="NCBI Taxonomy" id="355278"/>
    <lineage>
        <taxon>Bacteria</taxon>
        <taxon>Pseudomonadati</taxon>
        <taxon>Spirochaetota</taxon>
        <taxon>Spirochaetia</taxon>
        <taxon>Leptospirales</taxon>
        <taxon>Leptospiraceae</taxon>
        <taxon>Leptospira</taxon>
    </lineage>
</organism>
<name>PGK_LEPBA</name>
<dbReference type="EC" id="2.7.2.3" evidence="1"/>
<dbReference type="EMBL" id="CP000777">
    <property type="protein sequence ID" value="ABZ94527.1"/>
    <property type="molecule type" value="Genomic_DNA"/>
</dbReference>
<dbReference type="RefSeq" id="WP_012389053.1">
    <property type="nucleotide sequence ID" value="NC_010842.1"/>
</dbReference>
<dbReference type="SMR" id="B0SB21"/>
<dbReference type="KEGG" id="lbf:LBF_2027"/>
<dbReference type="HOGENOM" id="CLU_025427_0_2_12"/>
<dbReference type="UniPathway" id="UPA00109">
    <property type="reaction ID" value="UER00185"/>
</dbReference>
<dbReference type="GO" id="GO:0005829">
    <property type="term" value="C:cytosol"/>
    <property type="evidence" value="ECO:0007669"/>
    <property type="project" value="TreeGrafter"/>
</dbReference>
<dbReference type="GO" id="GO:0043531">
    <property type="term" value="F:ADP binding"/>
    <property type="evidence" value="ECO:0007669"/>
    <property type="project" value="TreeGrafter"/>
</dbReference>
<dbReference type="GO" id="GO:0005524">
    <property type="term" value="F:ATP binding"/>
    <property type="evidence" value="ECO:0007669"/>
    <property type="project" value="UniProtKB-KW"/>
</dbReference>
<dbReference type="GO" id="GO:0004618">
    <property type="term" value="F:phosphoglycerate kinase activity"/>
    <property type="evidence" value="ECO:0007669"/>
    <property type="project" value="UniProtKB-UniRule"/>
</dbReference>
<dbReference type="GO" id="GO:0006094">
    <property type="term" value="P:gluconeogenesis"/>
    <property type="evidence" value="ECO:0007669"/>
    <property type="project" value="TreeGrafter"/>
</dbReference>
<dbReference type="GO" id="GO:0006096">
    <property type="term" value="P:glycolytic process"/>
    <property type="evidence" value="ECO:0007669"/>
    <property type="project" value="UniProtKB-UniRule"/>
</dbReference>
<dbReference type="CDD" id="cd00318">
    <property type="entry name" value="Phosphoglycerate_kinase"/>
    <property type="match status" value="1"/>
</dbReference>
<dbReference type="FunFam" id="3.40.50.1260:FF:000003">
    <property type="entry name" value="Phosphoglycerate kinase"/>
    <property type="match status" value="1"/>
</dbReference>
<dbReference type="FunFam" id="3.40.50.1260:FF:000006">
    <property type="entry name" value="Phosphoglycerate kinase"/>
    <property type="match status" value="1"/>
</dbReference>
<dbReference type="Gene3D" id="3.40.50.1260">
    <property type="entry name" value="Phosphoglycerate kinase, N-terminal domain"/>
    <property type="match status" value="2"/>
</dbReference>
<dbReference type="HAMAP" id="MF_00145">
    <property type="entry name" value="Phosphoglyc_kinase"/>
    <property type="match status" value="1"/>
</dbReference>
<dbReference type="InterPro" id="IPR001576">
    <property type="entry name" value="Phosphoglycerate_kinase"/>
</dbReference>
<dbReference type="InterPro" id="IPR015911">
    <property type="entry name" value="Phosphoglycerate_kinase_CS"/>
</dbReference>
<dbReference type="InterPro" id="IPR015824">
    <property type="entry name" value="Phosphoglycerate_kinase_N"/>
</dbReference>
<dbReference type="InterPro" id="IPR036043">
    <property type="entry name" value="Phosphoglycerate_kinase_sf"/>
</dbReference>
<dbReference type="PANTHER" id="PTHR11406">
    <property type="entry name" value="PHOSPHOGLYCERATE KINASE"/>
    <property type="match status" value="1"/>
</dbReference>
<dbReference type="PANTHER" id="PTHR11406:SF23">
    <property type="entry name" value="PHOSPHOGLYCERATE KINASE 1, CHLOROPLASTIC-RELATED"/>
    <property type="match status" value="1"/>
</dbReference>
<dbReference type="Pfam" id="PF00162">
    <property type="entry name" value="PGK"/>
    <property type="match status" value="1"/>
</dbReference>
<dbReference type="PIRSF" id="PIRSF000724">
    <property type="entry name" value="Pgk"/>
    <property type="match status" value="1"/>
</dbReference>
<dbReference type="PRINTS" id="PR00477">
    <property type="entry name" value="PHGLYCKINASE"/>
</dbReference>
<dbReference type="SUPFAM" id="SSF53748">
    <property type="entry name" value="Phosphoglycerate kinase"/>
    <property type="match status" value="1"/>
</dbReference>
<dbReference type="PROSITE" id="PS00111">
    <property type="entry name" value="PGLYCERATE_KINASE"/>
    <property type="match status" value="1"/>
</dbReference>
<gene>
    <name evidence="1" type="primary">pgk</name>
    <name type="ordered locus">LBF_2027</name>
</gene>
<evidence type="ECO:0000255" key="1">
    <source>
        <dbReference type="HAMAP-Rule" id="MF_00145"/>
    </source>
</evidence>